<reference key="1">
    <citation type="journal article" date="1993" name="Biochemistry">
        <title>DNA sequencing of the seven remaining structural genes of the gene cluster encoding the energy-transducing NADH-quinone oxidoreductase of Paracoccus denitrificans.</title>
        <authorList>
            <person name="Xu X."/>
            <person name="Matsuno-Yagi A."/>
            <person name="Yagi T."/>
        </authorList>
    </citation>
    <scope>NUCLEOTIDE SEQUENCE [GENOMIC DNA]</scope>
    <source>
        <strain>ATCC 13543 / NRRL B-3784 / NRC 449</strain>
    </source>
</reference>
<dbReference type="EC" id="7.1.1.-"/>
<dbReference type="EMBL" id="L02354">
    <property type="protein sequence ID" value="AAA25592.1"/>
    <property type="molecule type" value="Genomic_DNA"/>
</dbReference>
<dbReference type="PIR" id="C45456">
    <property type="entry name" value="C45456"/>
</dbReference>
<dbReference type="SMR" id="P29920"/>
<dbReference type="TCDB" id="3.D.1.2.1">
    <property type="family name" value="the h+ or na+-translocating nadh dehydrogenase (ndh) family"/>
</dbReference>
<dbReference type="GO" id="GO:0005886">
    <property type="term" value="C:plasma membrane"/>
    <property type="evidence" value="ECO:0007669"/>
    <property type="project" value="UniProtKB-SubCell"/>
</dbReference>
<dbReference type="GO" id="GO:0003954">
    <property type="term" value="F:NADH dehydrogenase activity"/>
    <property type="evidence" value="ECO:0007669"/>
    <property type="project" value="TreeGrafter"/>
</dbReference>
<dbReference type="GO" id="GO:0016655">
    <property type="term" value="F:oxidoreductase activity, acting on NAD(P)H, quinone or similar compound as acceptor"/>
    <property type="evidence" value="ECO:0007669"/>
    <property type="project" value="UniProtKB-UniRule"/>
</dbReference>
<dbReference type="GO" id="GO:0048038">
    <property type="term" value="F:quinone binding"/>
    <property type="evidence" value="ECO:0007669"/>
    <property type="project" value="UniProtKB-KW"/>
</dbReference>
<dbReference type="GO" id="GO:0009060">
    <property type="term" value="P:aerobic respiration"/>
    <property type="evidence" value="ECO:0007669"/>
    <property type="project" value="TreeGrafter"/>
</dbReference>
<dbReference type="HAMAP" id="MF_01350">
    <property type="entry name" value="NDH1_NuoH"/>
    <property type="match status" value="1"/>
</dbReference>
<dbReference type="InterPro" id="IPR001694">
    <property type="entry name" value="NADH_UbQ_OxRdtase_su1/FPO"/>
</dbReference>
<dbReference type="InterPro" id="IPR018086">
    <property type="entry name" value="NADH_UbQ_OxRdtase_su1_CS"/>
</dbReference>
<dbReference type="NCBIfam" id="NF004741">
    <property type="entry name" value="PRK06076.1-2"/>
    <property type="match status" value="1"/>
</dbReference>
<dbReference type="NCBIfam" id="NF004745">
    <property type="entry name" value="PRK06076.1-6"/>
    <property type="match status" value="1"/>
</dbReference>
<dbReference type="PANTHER" id="PTHR11432">
    <property type="entry name" value="NADH DEHYDROGENASE SUBUNIT 1"/>
    <property type="match status" value="1"/>
</dbReference>
<dbReference type="PANTHER" id="PTHR11432:SF3">
    <property type="entry name" value="NADH-UBIQUINONE OXIDOREDUCTASE CHAIN 1"/>
    <property type="match status" value="1"/>
</dbReference>
<dbReference type="Pfam" id="PF00146">
    <property type="entry name" value="NADHdh"/>
    <property type="match status" value="1"/>
</dbReference>
<dbReference type="PROSITE" id="PS00667">
    <property type="entry name" value="COMPLEX1_ND1_1"/>
    <property type="match status" value="1"/>
</dbReference>
<dbReference type="PROSITE" id="PS00668">
    <property type="entry name" value="COMPLEX1_ND1_2"/>
    <property type="match status" value="1"/>
</dbReference>
<feature type="chain" id="PRO_0000117521" description="NADH-quinone oxidoreductase subunit 8">
    <location>
        <begin position="1"/>
        <end position="345"/>
    </location>
</feature>
<feature type="transmembrane region" description="Helical" evidence="1">
    <location>
        <begin position="15"/>
        <end position="35"/>
    </location>
</feature>
<feature type="transmembrane region" description="Helical" evidence="1">
    <location>
        <begin position="82"/>
        <end position="102"/>
    </location>
</feature>
<feature type="transmembrane region" description="Helical" evidence="1">
    <location>
        <begin position="115"/>
        <end position="135"/>
    </location>
</feature>
<feature type="transmembrane region" description="Helical" evidence="1">
    <location>
        <begin position="161"/>
        <end position="181"/>
    </location>
</feature>
<feature type="transmembrane region" description="Helical" evidence="1">
    <location>
        <begin position="190"/>
        <end position="210"/>
    </location>
</feature>
<feature type="transmembrane region" description="Helical" evidence="1">
    <location>
        <begin position="240"/>
        <end position="262"/>
    </location>
</feature>
<feature type="transmembrane region" description="Helical" evidence="1">
    <location>
        <begin position="278"/>
        <end position="298"/>
    </location>
</feature>
<feature type="transmembrane region" description="Helical" evidence="1">
    <location>
        <begin position="309"/>
        <end position="329"/>
    </location>
</feature>
<keyword id="KW-0997">Cell inner membrane</keyword>
<keyword id="KW-1003">Cell membrane</keyword>
<keyword id="KW-0472">Membrane</keyword>
<keyword id="KW-0520">NAD</keyword>
<keyword id="KW-0874">Quinone</keyword>
<keyword id="KW-1278">Translocase</keyword>
<keyword id="KW-0812">Transmembrane</keyword>
<keyword id="KW-1133">Transmembrane helix</keyword>
<keyword id="KW-0830">Ubiquinone</keyword>
<comment type="function">
    <text>NDH-1 shuttles electrons from NADH, via FMN and iron-sulfur (Fe-S) centers, to quinones in the respiratory chain. The immediate electron acceptor for the enzyme in this species is believed to be ubiquinone. Couples the redox reaction to proton translocation (for every two electrons transferred, four hydrogen ions are translocated across the cytoplasmic membrane), and thus conserves the redox energy in a proton gradient.</text>
</comment>
<comment type="catalytic activity">
    <reaction>
        <text>a quinone + NADH + 5 H(+)(in) = a quinol + NAD(+) + 4 H(+)(out)</text>
        <dbReference type="Rhea" id="RHEA:57888"/>
        <dbReference type="ChEBI" id="CHEBI:15378"/>
        <dbReference type="ChEBI" id="CHEBI:24646"/>
        <dbReference type="ChEBI" id="CHEBI:57540"/>
        <dbReference type="ChEBI" id="CHEBI:57945"/>
        <dbReference type="ChEBI" id="CHEBI:132124"/>
    </reaction>
</comment>
<comment type="subunit">
    <text>NDH-1 is composed of at least 14 different subunits, Nqo1 to Nqo14. The complex has a L-shaped structure, with the hydrophobic arm (subunits Nqo7, Nqo8, Nqo10 to Nqo14) embedded in the inner membrane and the hydrophilic peripheral arm (subunits Nqo1 to Nqo6, Nqo9) protruding into the bacterial cytoplasm. The hydrophilic domain contains all the redox centers.</text>
</comment>
<comment type="subcellular location">
    <subcellularLocation>
        <location>Cell inner membrane</location>
        <topology>Multi-pass membrane protein</topology>
    </subcellularLocation>
</comment>
<comment type="similarity">
    <text evidence="3">Belongs to the complex I subunit 1 family.</text>
</comment>
<gene>
    <name evidence="2" type="primary">nqo8</name>
</gene>
<sequence length="345" mass="38751">MAEFWASPYGFALSMLLQGLAVIAFVMGSLIFMVYGDRKIWAAVQMRRGPNVVGPWGLLQTFADALKYIVKEIVIPAGADKFVYFLAPFLSMMLALFAFVVIPFDEGWVMANINVGILFIFAASSLEVYGVIMGGWASNSKYPFLASLRSAAQMISYEVSLGLIIIGIIISTGSMNLTAIVEAHGGDYGLLNWYWLPHLPMVVLFFVSALAECNRPPFDLVEAESELVAGFMTEYSSTPYLLFMAGEYIAMYLMCALLSLLFFGGWLSPVPFIADGWWWMVIKMWFWFYMFAMVKAIVPRYRYDQLMRIGWKVFLPLSLGWVVLVAILARYEILGGFWARFAVGG</sequence>
<name>NQO8_PARDE</name>
<accession>P29920</accession>
<proteinExistence type="inferred from homology"/>
<protein>
    <recommendedName>
        <fullName>NADH-quinone oxidoreductase subunit 8</fullName>
        <ecNumber>7.1.1.-</ecNumber>
    </recommendedName>
    <alternativeName>
        <fullName>NADH dehydrogenase I subunit H</fullName>
    </alternativeName>
    <alternativeName>
        <fullName>NDH-1 subunit 8</fullName>
    </alternativeName>
</protein>
<evidence type="ECO:0000255" key="1"/>
<evidence type="ECO:0000303" key="2">
    <source>
    </source>
</evidence>
<evidence type="ECO:0000305" key="3"/>
<organism>
    <name type="scientific">Paracoccus denitrificans</name>
    <dbReference type="NCBI Taxonomy" id="266"/>
    <lineage>
        <taxon>Bacteria</taxon>
        <taxon>Pseudomonadati</taxon>
        <taxon>Pseudomonadota</taxon>
        <taxon>Alphaproteobacteria</taxon>
        <taxon>Rhodobacterales</taxon>
        <taxon>Paracoccaceae</taxon>
        <taxon>Paracoccus</taxon>
    </lineage>
</organism>